<feature type="chain" id="PRO_0000163458" description="Large ribosomal subunit protein bL19">
    <location>
        <begin position="1"/>
        <end position="120"/>
    </location>
</feature>
<dbReference type="EMBL" id="BA000043">
    <property type="protein sequence ID" value="BAD75487.1"/>
    <property type="molecule type" value="Genomic_DNA"/>
</dbReference>
<dbReference type="RefSeq" id="WP_011230702.1">
    <property type="nucleotide sequence ID" value="NC_006510.1"/>
</dbReference>
<dbReference type="SMR" id="Q5L0P3"/>
<dbReference type="STRING" id="235909.GK1202"/>
<dbReference type="KEGG" id="gka:GK1202"/>
<dbReference type="PATRIC" id="fig|235909.7.peg.1302"/>
<dbReference type="eggNOG" id="COG0335">
    <property type="taxonomic scope" value="Bacteria"/>
</dbReference>
<dbReference type="HOGENOM" id="CLU_103507_2_1_9"/>
<dbReference type="Proteomes" id="UP000001172">
    <property type="component" value="Chromosome"/>
</dbReference>
<dbReference type="GO" id="GO:0022625">
    <property type="term" value="C:cytosolic large ribosomal subunit"/>
    <property type="evidence" value="ECO:0007669"/>
    <property type="project" value="TreeGrafter"/>
</dbReference>
<dbReference type="GO" id="GO:0003735">
    <property type="term" value="F:structural constituent of ribosome"/>
    <property type="evidence" value="ECO:0007669"/>
    <property type="project" value="InterPro"/>
</dbReference>
<dbReference type="GO" id="GO:0006412">
    <property type="term" value="P:translation"/>
    <property type="evidence" value="ECO:0007669"/>
    <property type="project" value="UniProtKB-UniRule"/>
</dbReference>
<dbReference type="Gene3D" id="2.30.30.790">
    <property type="match status" value="1"/>
</dbReference>
<dbReference type="HAMAP" id="MF_00402">
    <property type="entry name" value="Ribosomal_bL19"/>
    <property type="match status" value="1"/>
</dbReference>
<dbReference type="InterPro" id="IPR001857">
    <property type="entry name" value="Ribosomal_bL19"/>
</dbReference>
<dbReference type="InterPro" id="IPR018257">
    <property type="entry name" value="Ribosomal_bL19_CS"/>
</dbReference>
<dbReference type="InterPro" id="IPR038657">
    <property type="entry name" value="Ribosomal_bL19_sf"/>
</dbReference>
<dbReference type="InterPro" id="IPR008991">
    <property type="entry name" value="Translation_prot_SH3-like_sf"/>
</dbReference>
<dbReference type="NCBIfam" id="TIGR01024">
    <property type="entry name" value="rplS_bact"/>
    <property type="match status" value="1"/>
</dbReference>
<dbReference type="PANTHER" id="PTHR15680:SF9">
    <property type="entry name" value="LARGE RIBOSOMAL SUBUNIT PROTEIN BL19M"/>
    <property type="match status" value="1"/>
</dbReference>
<dbReference type="PANTHER" id="PTHR15680">
    <property type="entry name" value="RIBOSOMAL PROTEIN L19"/>
    <property type="match status" value="1"/>
</dbReference>
<dbReference type="Pfam" id="PF01245">
    <property type="entry name" value="Ribosomal_L19"/>
    <property type="match status" value="1"/>
</dbReference>
<dbReference type="PIRSF" id="PIRSF002191">
    <property type="entry name" value="Ribosomal_L19"/>
    <property type="match status" value="1"/>
</dbReference>
<dbReference type="PRINTS" id="PR00061">
    <property type="entry name" value="RIBOSOMALL19"/>
</dbReference>
<dbReference type="SUPFAM" id="SSF50104">
    <property type="entry name" value="Translation proteins SH3-like domain"/>
    <property type="match status" value="1"/>
</dbReference>
<dbReference type="PROSITE" id="PS01015">
    <property type="entry name" value="RIBOSOMAL_L19"/>
    <property type="match status" value="1"/>
</dbReference>
<gene>
    <name evidence="1" type="primary">rplS</name>
    <name type="ordered locus">GK1202</name>
</gene>
<reference key="1">
    <citation type="journal article" date="2004" name="Nucleic Acids Res.">
        <title>Thermoadaptation trait revealed by the genome sequence of thermophilic Geobacillus kaustophilus.</title>
        <authorList>
            <person name="Takami H."/>
            <person name="Takaki Y."/>
            <person name="Chee G.-J."/>
            <person name="Nishi S."/>
            <person name="Shimamura S."/>
            <person name="Suzuki H."/>
            <person name="Matsui S."/>
            <person name="Uchiyama I."/>
        </authorList>
    </citation>
    <scope>NUCLEOTIDE SEQUENCE [LARGE SCALE GENOMIC DNA]</scope>
    <source>
        <strain>HTA426</strain>
    </source>
</reference>
<sequence length="120" mass="13815">MMHHLIQEITKEQLRTDLPDFRPGDTVRVHVKVVEGNRERIQVFEGVVIKRRGAGISENVHGPQSVLWRPALSAHSRVHTPKIAKLEVIRRGKVRRAKLYYLRELRGKAARIKENTNAAQ</sequence>
<protein>
    <recommendedName>
        <fullName evidence="1">Large ribosomal subunit protein bL19</fullName>
    </recommendedName>
    <alternativeName>
        <fullName evidence="2">50S ribosomal protein L19</fullName>
    </alternativeName>
</protein>
<name>RL19_GEOKA</name>
<proteinExistence type="inferred from homology"/>
<comment type="function">
    <text evidence="1">This protein is located at the 30S-50S ribosomal subunit interface and may play a role in the structure and function of the aminoacyl-tRNA binding site.</text>
</comment>
<comment type="similarity">
    <text evidence="1">Belongs to the bacterial ribosomal protein bL19 family.</text>
</comment>
<organism>
    <name type="scientific">Geobacillus kaustophilus (strain HTA426)</name>
    <dbReference type="NCBI Taxonomy" id="235909"/>
    <lineage>
        <taxon>Bacteria</taxon>
        <taxon>Bacillati</taxon>
        <taxon>Bacillota</taxon>
        <taxon>Bacilli</taxon>
        <taxon>Bacillales</taxon>
        <taxon>Anoxybacillaceae</taxon>
        <taxon>Geobacillus</taxon>
        <taxon>Geobacillus thermoleovorans group</taxon>
    </lineage>
</organism>
<keyword id="KW-1185">Reference proteome</keyword>
<keyword id="KW-0687">Ribonucleoprotein</keyword>
<keyword id="KW-0689">Ribosomal protein</keyword>
<evidence type="ECO:0000255" key="1">
    <source>
        <dbReference type="HAMAP-Rule" id="MF_00402"/>
    </source>
</evidence>
<evidence type="ECO:0000305" key="2"/>
<accession>Q5L0P3</accession>